<protein>
    <recommendedName>
        <fullName evidence="1">Ribosome-binding factor A</fullName>
    </recommendedName>
</protein>
<feature type="chain" id="PRO_0000321208" description="Ribosome-binding factor A">
    <location>
        <begin position="1"/>
        <end position="122"/>
    </location>
</feature>
<name>RBFA_BURP1</name>
<reference key="1">
    <citation type="journal article" date="2010" name="Genome Biol. Evol.">
        <title>Continuing evolution of Burkholderia mallei through genome reduction and large-scale rearrangements.</title>
        <authorList>
            <person name="Losada L."/>
            <person name="Ronning C.M."/>
            <person name="DeShazer D."/>
            <person name="Woods D."/>
            <person name="Fedorova N."/>
            <person name="Kim H.S."/>
            <person name="Shabalina S.A."/>
            <person name="Pearson T.R."/>
            <person name="Brinkac L."/>
            <person name="Tan P."/>
            <person name="Nandi T."/>
            <person name="Crabtree J."/>
            <person name="Badger J."/>
            <person name="Beckstrom-Sternberg S."/>
            <person name="Saqib M."/>
            <person name="Schutzer S.E."/>
            <person name="Keim P."/>
            <person name="Nierman W.C."/>
        </authorList>
    </citation>
    <scope>NUCLEOTIDE SEQUENCE [LARGE SCALE GENOMIC DNA]</scope>
    <source>
        <strain>1710b</strain>
    </source>
</reference>
<evidence type="ECO:0000255" key="1">
    <source>
        <dbReference type="HAMAP-Rule" id="MF_00003"/>
    </source>
</evidence>
<evidence type="ECO:0000305" key="2"/>
<comment type="function">
    <text evidence="1">One of several proteins that assist in the late maturation steps of the functional core of the 30S ribosomal subunit. Associates with free 30S ribosomal subunits (but not with 30S subunits that are part of 70S ribosomes or polysomes). Required for efficient processing of 16S rRNA. May interact with the 5'-terminal helix region of 16S rRNA.</text>
</comment>
<comment type="subunit">
    <text evidence="1">Monomer. Binds 30S ribosomal subunits, but not 50S ribosomal subunits or 70S ribosomes.</text>
</comment>
<comment type="subcellular location">
    <subcellularLocation>
        <location evidence="1">Cytoplasm</location>
    </subcellularLocation>
</comment>
<comment type="similarity">
    <text evidence="1">Belongs to the RbfA family.</text>
</comment>
<comment type="sequence caution" evidence="2">
    <conflict type="erroneous initiation">
        <sequence resource="EMBL-CDS" id="ABA49963"/>
    </conflict>
    <text>Extended N-terminus.</text>
</comment>
<organism>
    <name type="scientific">Burkholderia pseudomallei (strain 1710b)</name>
    <dbReference type="NCBI Taxonomy" id="320372"/>
    <lineage>
        <taxon>Bacteria</taxon>
        <taxon>Pseudomonadati</taxon>
        <taxon>Pseudomonadota</taxon>
        <taxon>Betaproteobacteria</taxon>
        <taxon>Burkholderiales</taxon>
        <taxon>Burkholderiaceae</taxon>
        <taxon>Burkholderia</taxon>
        <taxon>pseudomallei group</taxon>
    </lineage>
</organism>
<keyword id="KW-0963">Cytoplasm</keyword>
<keyword id="KW-0690">Ribosome biogenesis</keyword>
<dbReference type="EMBL" id="CP000124">
    <property type="protein sequence ID" value="ABA49963.1"/>
    <property type="status" value="ALT_INIT"/>
    <property type="molecule type" value="Genomic_DNA"/>
</dbReference>
<dbReference type="RefSeq" id="WP_004199441.1">
    <property type="nucleotide sequence ID" value="NC_007434.1"/>
</dbReference>
<dbReference type="SMR" id="Q3JSY8"/>
<dbReference type="EnsemblBacteria" id="ABA49963">
    <property type="protein sequence ID" value="ABA49963"/>
    <property type="gene ID" value="BURPS1710b_1916"/>
</dbReference>
<dbReference type="GeneID" id="93060074"/>
<dbReference type="KEGG" id="bpm:BURPS1710b_1916"/>
<dbReference type="HOGENOM" id="CLU_089475_5_1_4"/>
<dbReference type="Proteomes" id="UP000002700">
    <property type="component" value="Chromosome I"/>
</dbReference>
<dbReference type="GO" id="GO:0005829">
    <property type="term" value="C:cytosol"/>
    <property type="evidence" value="ECO:0007669"/>
    <property type="project" value="TreeGrafter"/>
</dbReference>
<dbReference type="GO" id="GO:0043024">
    <property type="term" value="F:ribosomal small subunit binding"/>
    <property type="evidence" value="ECO:0007669"/>
    <property type="project" value="TreeGrafter"/>
</dbReference>
<dbReference type="GO" id="GO:0030490">
    <property type="term" value="P:maturation of SSU-rRNA"/>
    <property type="evidence" value="ECO:0007669"/>
    <property type="project" value="UniProtKB-UniRule"/>
</dbReference>
<dbReference type="Gene3D" id="3.30.300.20">
    <property type="match status" value="1"/>
</dbReference>
<dbReference type="HAMAP" id="MF_00003">
    <property type="entry name" value="RbfA"/>
    <property type="match status" value="1"/>
</dbReference>
<dbReference type="InterPro" id="IPR015946">
    <property type="entry name" value="KH_dom-like_a/b"/>
</dbReference>
<dbReference type="InterPro" id="IPR000238">
    <property type="entry name" value="RbfA"/>
</dbReference>
<dbReference type="InterPro" id="IPR023799">
    <property type="entry name" value="RbfA_dom_sf"/>
</dbReference>
<dbReference type="NCBIfam" id="TIGR00082">
    <property type="entry name" value="rbfA"/>
    <property type="match status" value="1"/>
</dbReference>
<dbReference type="PANTHER" id="PTHR33515">
    <property type="entry name" value="RIBOSOME-BINDING FACTOR A, CHLOROPLASTIC-RELATED"/>
    <property type="match status" value="1"/>
</dbReference>
<dbReference type="PANTHER" id="PTHR33515:SF1">
    <property type="entry name" value="RIBOSOME-BINDING FACTOR A, CHLOROPLASTIC-RELATED"/>
    <property type="match status" value="1"/>
</dbReference>
<dbReference type="Pfam" id="PF02033">
    <property type="entry name" value="RBFA"/>
    <property type="match status" value="1"/>
</dbReference>
<dbReference type="SUPFAM" id="SSF89919">
    <property type="entry name" value="Ribosome-binding factor A, RbfA"/>
    <property type="match status" value="1"/>
</dbReference>
<accession>Q3JSY8</accession>
<gene>
    <name evidence="1" type="primary">rbfA</name>
    <name type="ordered locus">BURPS1710b_1916</name>
</gene>
<sequence length="122" mass="13808">MSKKRSSPNRNVQIADQIQRDLSELIMREVKDPRIGIVTIQSVELTPDYAHAKVYFTALTGTPADTQEALNHAAGHLHNLLFKRLHIHTVPTLHFHYDQTIEKAVAMSRLIDEANATRAKDD</sequence>
<proteinExistence type="inferred from homology"/>